<keyword id="KW-0067">ATP-binding</keyword>
<keyword id="KW-0131">Cell cycle</keyword>
<keyword id="KW-0132">Cell division</keyword>
<keyword id="KW-0133">Cell shape</keyword>
<keyword id="KW-0961">Cell wall biogenesis/degradation</keyword>
<keyword id="KW-0963">Cytoplasm</keyword>
<keyword id="KW-0436">Ligase</keyword>
<keyword id="KW-0547">Nucleotide-binding</keyword>
<keyword id="KW-0573">Peptidoglycan synthesis</keyword>
<keyword id="KW-1185">Reference proteome</keyword>
<feature type="chain" id="PRO_0000242583" description="UDP-N-acetylmuramate--L-alanine ligase">
    <location>
        <begin position="1"/>
        <end position="471"/>
    </location>
</feature>
<feature type="binding site" evidence="1">
    <location>
        <begin position="114"/>
        <end position="120"/>
    </location>
    <ligand>
        <name>ATP</name>
        <dbReference type="ChEBI" id="CHEBI:30616"/>
    </ligand>
</feature>
<dbReference type="EC" id="6.3.2.8" evidence="1"/>
<dbReference type="EMBL" id="CP000133">
    <property type="protein sequence ID" value="ABC91614.1"/>
    <property type="status" value="ALT_INIT"/>
    <property type="molecule type" value="Genomic_DNA"/>
</dbReference>
<dbReference type="RefSeq" id="WP_011426091.1">
    <property type="nucleotide sequence ID" value="NC_007761.1"/>
</dbReference>
<dbReference type="SMR" id="Q2K6C2"/>
<dbReference type="KEGG" id="ret:RHE_CH02846"/>
<dbReference type="eggNOG" id="COG0773">
    <property type="taxonomic scope" value="Bacteria"/>
</dbReference>
<dbReference type="HOGENOM" id="CLU_028104_2_2_5"/>
<dbReference type="OrthoDB" id="9804126at2"/>
<dbReference type="UniPathway" id="UPA00219"/>
<dbReference type="Proteomes" id="UP000001936">
    <property type="component" value="Chromosome"/>
</dbReference>
<dbReference type="GO" id="GO:0005737">
    <property type="term" value="C:cytoplasm"/>
    <property type="evidence" value="ECO:0007669"/>
    <property type="project" value="UniProtKB-SubCell"/>
</dbReference>
<dbReference type="GO" id="GO:0005524">
    <property type="term" value="F:ATP binding"/>
    <property type="evidence" value="ECO:0007669"/>
    <property type="project" value="UniProtKB-UniRule"/>
</dbReference>
<dbReference type="GO" id="GO:0008763">
    <property type="term" value="F:UDP-N-acetylmuramate-L-alanine ligase activity"/>
    <property type="evidence" value="ECO:0007669"/>
    <property type="project" value="UniProtKB-UniRule"/>
</dbReference>
<dbReference type="GO" id="GO:0051301">
    <property type="term" value="P:cell division"/>
    <property type="evidence" value="ECO:0007669"/>
    <property type="project" value="UniProtKB-KW"/>
</dbReference>
<dbReference type="GO" id="GO:0071555">
    <property type="term" value="P:cell wall organization"/>
    <property type="evidence" value="ECO:0007669"/>
    <property type="project" value="UniProtKB-KW"/>
</dbReference>
<dbReference type="GO" id="GO:0009252">
    <property type="term" value="P:peptidoglycan biosynthetic process"/>
    <property type="evidence" value="ECO:0007669"/>
    <property type="project" value="UniProtKB-UniRule"/>
</dbReference>
<dbReference type="GO" id="GO:0008360">
    <property type="term" value="P:regulation of cell shape"/>
    <property type="evidence" value="ECO:0007669"/>
    <property type="project" value="UniProtKB-KW"/>
</dbReference>
<dbReference type="Gene3D" id="3.90.190.20">
    <property type="entry name" value="Mur ligase, C-terminal domain"/>
    <property type="match status" value="1"/>
</dbReference>
<dbReference type="Gene3D" id="3.40.1190.10">
    <property type="entry name" value="Mur-like, catalytic domain"/>
    <property type="match status" value="1"/>
</dbReference>
<dbReference type="Gene3D" id="3.40.50.720">
    <property type="entry name" value="NAD(P)-binding Rossmann-like Domain"/>
    <property type="match status" value="1"/>
</dbReference>
<dbReference type="HAMAP" id="MF_00046">
    <property type="entry name" value="MurC"/>
    <property type="match status" value="1"/>
</dbReference>
<dbReference type="InterPro" id="IPR036565">
    <property type="entry name" value="Mur-like_cat_sf"/>
</dbReference>
<dbReference type="InterPro" id="IPR004101">
    <property type="entry name" value="Mur_ligase_C"/>
</dbReference>
<dbReference type="InterPro" id="IPR036615">
    <property type="entry name" value="Mur_ligase_C_dom_sf"/>
</dbReference>
<dbReference type="InterPro" id="IPR013221">
    <property type="entry name" value="Mur_ligase_cen"/>
</dbReference>
<dbReference type="InterPro" id="IPR000713">
    <property type="entry name" value="Mur_ligase_N"/>
</dbReference>
<dbReference type="InterPro" id="IPR050061">
    <property type="entry name" value="MurCDEF_pg_biosynth"/>
</dbReference>
<dbReference type="InterPro" id="IPR005758">
    <property type="entry name" value="UDP-N-AcMur_Ala_ligase_MurC"/>
</dbReference>
<dbReference type="NCBIfam" id="TIGR01082">
    <property type="entry name" value="murC"/>
    <property type="match status" value="1"/>
</dbReference>
<dbReference type="PANTHER" id="PTHR43445:SF3">
    <property type="entry name" value="UDP-N-ACETYLMURAMATE--L-ALANINE LIGASE"/>
    <property type="match status" value="1"/>
</dbReference>
<dbReference type="PANTHER" id="PTHR43445">
    <property type="entry name" value="UDP-N-ACETYLMURAMATE--L-ALANINE LIGASE-RELATED"/>
    <property type="match status" value="1"/>
</dbReference>
<dbReference type="Pfam" id="PF01225">
    <property type="entry name" value="Mur_ligase"/>
    <property type="match status" value="1"/>
</dbReference>
<dbReference type="Pfam" id="PF02875">
    <property type="entry name" value="Mur_ligase_C"/>
    <property type="match status" value="1"/>
</dbReference>
<dbReference type="Pfam" id="PF08245">
    <property type="entry name" value="Mur_ligase_M"/>
    <property type="match status" value="1"/>
</dbReference>
<dbReference type="SUPFAM" id="SSF51984">
    <property type="entry name" value="MurCD N-terminal domain"/>
    <property type="match status" value="1"/>
</dbReference>
<dbReference type="SUPFAM" id="SSF53623">
    <property type="entry name" value="MurD-like peptide ligases, catalytic domain"/>
    <property type="match status" value="1"/>
</dbReference>
<dbReference type="SUPFAM" id="SSF53244">
    <property type="entry name" value="MurD-like peptide ligases, peptide-binding domain"/>
    <property type="match status" value="1"/>
</dbReference>
<name>MURC_RHIEC</name>
<evidence type="ECO:0000255" key="1">
    <source>
        <dbReference type="HAMAP-Rule" id="MF_00046"/>
    </source>
</evidence>
<evidence type="ECO:0000305" key="2"/>
<organism>
    <name type="scientific">Rhizobium etli (strain ATCC 51251 / DSM 11541 / JCM 21823 / NBRC 15573 / CFN 42)</name>
    <dbReference type="NCBI Taxonomy" id="347834"/>
    <lineage>
        <taxon>Bacteria</taxon>
        <taxon>Pseudomonadati</taxon>
        <taxon>Pseudomonadota</taxon>
        <taxon>Alphaproteobacteria</taxon>
        <taxon>Hyphomicrobiales</taxon>
        <taxon>Rhizobiaceae</taxon>
        <taxon>Rhizobium/Agrobacterium group</taxon>
        <taxon>Rhizobium</taxon>
    </lineage>
</organism>
<comment type="function">
    <text evidence="1">Cell wall formation.</text>
</comment>
<comment type="catalytic activity">
    <reaction evidence="1">
        <text>UDP-N-acetyl-alpha-D-muramate + L-alanine + ATP = UDP-N-acetyl-alpha-D-muramoyl-L-alanine + ADP + phosphate + H(+)</text>
        <dbReference type="Rhea" id="RHEA:23372"/>
        <dbReference type="ChEBI" id="CHEBI:15378"/>
        <dbReference type="ChEBI" id="CHEBI:30616"/>
        <dbReference type="ChEBI" id="CHEBI:43474"/>
        <dbReference type="ChEBI" id="CHEBI:57972"/>
        <dbReference type="ChEBI" id="CHEBI:70757"/>
        <dbReference type="ChEBI" id="CHEBI:83898"/>
        <dbReference type="ChEBI" id="CHEBI:456216"/>
        <dbReference type="EC" id="6.3.2.8"/>
    </reaction>
</comment>
<comment type="pathway">
    <text evidence="1">Cell wall biogenesis; peptidoglycan biosynthesis.</text>
</comment>
<comment type="subcellular location">
    <subcellularLocation>
        <location evidence="1">Cytoplasm</location>
    </subcellularLocation>
</comment>
<comment type="similarity">
    <text evidence="1">Belongs to the MurCDEF family.</text>
</comment>
<comment type="sequence caution" evidence="2">
    <conflict type="erroneous initiation">
        <sequence resource="EMBL-CDS" id="ABC91614"/>
    </conflict>
</comment>
<protein>
    <recommendedName>
        <fullName evidence="1">UDP-N-acetylmuramate--L-alanine ligase</fullName>
        <ecNumber evidence="1">6.3.2.8</ecNumber>
    </recommendedName>
    <alternativeName>
        <fullName evidence="1">UDP-N-acetylmuramoyl-L-alanine synthetase</fullName>
    </alternativeName>
</protein>
<reference key="1">
    <citation type="journal article" date="2006" name="Proc. Natl. Acad. Sci. U.S.A.">
        <title>The partitioned Rhizobium etli genome: genetic and metabolic redundancy in seven interacting replicons.</title>
        <authorList>
            <person name="Gonzalez V."/>
            <person name="Santamaria R.I."/>
            <person name="Bustos P."/>
            <person name="Hernandez-Gonzalez I."/>
            <person name="Medrano-Soto A."/>
            <person name="Moreno-Hagelsieb G."/>
            <person name="Janga S.C."/>
            <person name="Ramirez M.A."/>
            <person name="Jimenez-Jacinto V."/>
            <person name="Collado-Vides J."/>
            <person name="Davila G."/>
        </authorList>
    </citation>
    <scope>NUCLEOTIDE SEQUENCE [LARGE SCALE GENOMIC DNA]</scope>
    <source>
        <strain>ATCC 51251 / DSM 11541 / JCM 21823 / NBRC 15573 / CFN 42</strain>
    </source>
</reference>
<sequence length="471" mass="50817">MKLPKAIGLVHFIGIGGIGMSGIAEVLHNLGHKVQGSDQSDSANVQRLREKGIEVFVGHRAENLGDAEVVVVSTAIRKSNPELIAAREKLLPVVRRAEMLAELMRFRNAIAIGGTHGKTTTTSLVATLLEAGGLDPTVINGGIINAYGTNARMGEGEWMVVEADESDGTFLKLPADVAVITNIDPEHLDHYGNFDAVRAAFRQFVENVPFYGFGVMCLDHPEVQSLVGRIEDRKIITYGENPQADVRFKNVRIDGTRSIFDVEIRRRRTGQRTELKGLVMPMPGRHNISNATAAIAVANRLGISSEDIAKGLASFGGVKRRFTLTGEWNGVQIFDDYGHHPVEIKAVLKAAREACKGRIIAVHQPHRYTRLASLFEEFAACFNDADSILLAPVYAAGEDAIEGVDSTSLVSRIKSGGHRDARFLSSAELLPEMVAEVAKPGDFVVLLGAGSITSWAAALPKQLEGLSGKSA</sequence>
<gene>
    <name evidence="1" type="primary">murC</name>
    <name type="ordered locus">RHE_CH02846</name>
</gene>
<accession>Q2K6C2</accession>
<proteinExistence type="inferred from homology"/>